<gene>
    <name evidence="1" type="primary">rpsE</name>
    <name type="ordered locus">jk1794</name>
</gene>
<organism>
    <name type="scientific">Corynebacterium jeikeium (strain K411)</name>
    <dbReference type="NCBI Taxonomy" id="306537"/>
    <lineage>
        <taxon>Bacteria</taxon>
        <taxon>Bacillati</taxon>
        <taxon>Actinomycetota</taxon>
        <taxon>Actinomycetes</taxon>
        <taxon>Mycobacteriales</taxon>
        <taxon>Corynebacteriaceae</taxon>
        <taxon>Corynebacterium</taxon>
    </lineage>
</organism>
<accession>Q4JT86</accession>
<proteinExistence type="inferred from homology"/>
<protein>
    <recommendedName>
        <fullName evidence="1">Small ribosomal subunit protein uS5</fullName>
    </recommendedName>
    <alternativeName>
        <fullName evidence="3">30S ribosomal protein S5</fullName>
    </alternativeName>
</protein>
<keyword id="KW-1185">Reference proteome</keyword>
<keyword id="KW-0687">Ribonucleoprotein</keyword>
<keyword id="KW-0689">Ribosomal protein</keyword>
<keyword id="KW-0694">RNA-binding</keyword>
<keyword id="KW-0699">rRNA-binding</keyword>
<evidence type="ECO:0000255" key="1">
    <source>
        <dbReference type="HAMAP-Rule" id="MF_01307"/>
    </source>
</evidence>
<evidence type="ECO:0000256" key="2">
    <source>
        <dbReference type="SAM" id="MobiDB-lite"/>
    </source>
</evidence>
<evidence type="ECO:0000305" key="3"/>
<dbReference type="EMBL" id="CR931997">
    <property type="protein sequence ID" value="CAI37971.1"/>
    <property type="molecule type" value="Genomic_DNA"/>
</dbReference>
<dbReference type="RefSeq" id="WP_011274134.1">
    <property type="nucleotide sequence ID" value="NC_007164.1"/>
</dbReference>
<dbReference type="SMR" id="Q4JT86"/>
<dbReference type="STRING" id="306537.jk1794"/>
<dbReference type="KEGG" id="cjk:jk1794"/>
<dbReference type="PATRIC" id="fig|306537.10.peg.1819"/>
<dbReference type="eggNOG" id="COG0098">
    <property type="taxonomic scope" value="Bacteria"/>
</dbReference>
<dbReference type="HOGENOM" id="CLU_065898_1_0_11"/>
<dbReference type="OrthoDB" id="9809045at2"/>
<dbReference type="Proteomes" id="UP000000545">
    <property type="component" value="Chromosome"/>
</dbReference>
<dbReference type="GO" id="GO:0015935">
    <property type="term" value="C:small ribosomal subunit"/>
    <property type="evidence" value="ECO:0007669"/>
    <property type="project" value="InterPro"/>
</dbReference>
<dbReference type="GO" id="GO:0019843">
    <property type="term" value="F:rRNA binding"/>
    <property type="evidence" value="ECO:0007669"/>
    <property type="project" value="UniProtKB-UniRule"/>
</dbReference>
<dbReference type="GO" id="GO:0003735">
    <property type="term" value="F:structural constituent of ribosome"/>
    <property type="evidence" value="ECO:0007669"/>
    <property type="project" value="InterPro"/>
</dbReference>
<dbReference type="GO" id="GO:0006412">
    <property type="term" value="P:translation"/>
    <property type="evidence" value="ECO:0007669"/>
    <property type="project" value="UniProtKB-UniRule"/>
</dbReference>
<dbReference type="FunFam" id="3.30.160.20:FF:000001">
    <property type="entry name" value="30S ribosomal protein S5"/>
    <property type="match status" value="1"/>
</dbReference>
<dbReference type="FunFam" id="3.30.230.10:FF:000002">
    <property type="entry name" value="30S ribosomal protein S5"/>
    <property type="match status" value="1"/>
</dbReference>
<dbReference type="Gene3D" id="3.30.160.20">
    <property type="match status" value="1"/>
</dbReference>
<dbReference type="Gene3D" id="3.30.230.10">
    <property type="match status" value="1"/>
</dbReference>
<dbReference type="HAMAP" id="MF_01307_B">
    <property type="entry name" value="Ribosomal_uS5_B"/>
    <property type="match status" value="1"/>
</dbReference>
<dbReference type="InterPro" id="IPR020568">
    <property type="entry name" value="Ribosomal_Su5_D2-typ_SF"/>
</dbReference>
<dbReference type="InterPro" id="IPR000851">
    <property type="entry name" value="Ribosomal_uS5"/>
</dbReference>
<dbReference type="InterPro" id="IPR005712">
    <property type="entry name" value="Ribosomal_uS5_bac-type"/>
</dbReference>
<dbReference type="InterPro" id="IPR005324">
    <property type="entry name" value="Ribosomal_uS5_C"/>
</dbReference>
<dbReference type="InterPro" id="IPR013810">
    <property type="entry name" value="Ribosomal_uS5_N"/>
</dbReference>
<dbReference type="InterPro" id="IPR018192">
    <property type="entry name" value="Ribosomal_uS5_N_CS"/>
</dbReference>
<dbReference type="InterPro" id="IPR014721">
    <property type="entry name" value="Ribsml_uS5_D2-typ_fold_subgr"/>
</dbReference>
<dbReference type="NCBIfam" id="TIGR01021">
    <property type="entry name" value="rpsE_bact"/>
    <property type="match status" value="1"/>
</dbReference>
<dbReference type="PANTHER" id="PTHR48277">
    <property type="entry name" value="MITOCHONDRIAL RIBOSOMAL PROTEIN S5"/>
    <property type="match status" value="1"/>
</dbReference>
<dbReference type="PANTHER" id="PTHR48277:SF1">
    <property type="entry name" value="MITOCHONDRIAL RIBOSOMAL PROTEIN S5"/>
    <property type="match status" value="1"/>
</dbReference>
<dbReference type="Pfam" id="PF00333">
    <property type="entry name" value="Ribosomal_S5"/>
    <property type="match status" value="1"/>
</dbReference>
<dbReference type="Pfam" id="PF03719">
    <property type="entry name" value="Ribosomal_S5_C"/>
    <property type="match status" value="1"/>
</dbReference>
<dbReference type="SUPFAM" id="SSF54768">
    <property type="entry name" value="dsRNA-binding domain-like"/>
    <property type="match status" value="1"/>
</dbReference>
<dbReference type="SUPFAM" id="SSF54211">
    <property type="entry name" value="Ribosomal protein S5 domain 2-like"/>
    <property type="match status" value="1"/>
</dbReference>
<dbReference type="PROSITE" id="PS00585">
    <property type="entry name" value="RIBOSOMAL_S5"/>
    <property type="match status" value="1"/>
</dbReference>
<dbReference type="PROSITE" id="PS50881">
    <property type="entry name" value="S5_DSRBD"/>
    <property type="match status" value="1"/>
</dbReference>
<feature type="chain" id="PRO_0000230341" description="Small ribosomal subunit protein uS5">
    <location>
        <begin position="1"/>
        <end position="213"/>
    </location>
</feature>
<feature type="domain" description="S5 DRBM" evidence="1">
    <location>
        <begin position="45"/>
        <end position="108"/>
    </location>
</feature>
<feature type="region of interest" description="Disordered" evidence="2">
    <location>
        <begin position="1"/>
        <end position="41"/>
    </location>
</feature>
<sequence length="213" mass="22636">MSGRERNGGRSAENNDKKERNERNGRNDRGGRNDRRNQQDERSQFIERVVTINRVSKVVKGGRRFSFTALVIVGDGQGMVGVGYGKAKEVPAAIQKGAEEARKNFFRVPMINGTITHPVQGEDAAGIVMMKPAAPGTGVIAGGAVRPVLECAGVQDILSKSLGSDNAINIVHATVAGLKQLVRPEEVAARRGKSLDEVAPAAMLRARAAGQGA</sequence>
<reference key="1">
    <citation type="journal article" date="2005" name="J. Bacteriol.">
        <title>Complete genome sequence and analysis of the multiresistant nosocomial pathogen Corynebacterium jeikeium K411, a lipid-requiring bacterium of the human skin flora.</title>
        <authorList>
            <person name="Tauch A."/>
            <person name="Kaiser O."/>
            <person name="Hain T."/>
            <person name="Goesmann A."/>
            <person name="Weisshaar B."/>
            <person name="Albersmeier A."/>
            <person name="Bekel T."/>
            <person name="Bischoff N."/>
            <person name="Brune I."/>
            <person name="Chakraborty T."/>
            <person name="Kalinowski J."/>
            <person name="Meyer F."/>
            <person name="Rupp O."/>
            <person name="Schneiker S."/>
            <person name="Viehoever P."/>
            <person name="Puehler A."/>
        </authorList>
    </citation>
    <scope>NUCLEOTIDE SEQUENCE [LARGE SCALE GENOMIC DNA]</scope>
    <source>
        <strain>K411</strain>
    </source>
</reference>
<comment type="function">
    <text evidence="1">With S4 and S12 plays an important role in translational accuracy.</text>
</comment>
<comment type="function">
    <text evidence="1">Located at the back of the 30S subunit body where it stabilizes the conformation of the head with respect to the body.</text>
</comment>
<comment type="subunit">
    <text evidence="1">Part of the 30S ribosomal subunit. Contacts proteins S4 and S8.</text>
</comment>
<comment type="domain">
    <text>The N-terminal domain interacts with the head of the 30S subunit; the C-terminal domain interacts with the body and contacts protein S4. The interaction surface between S4 and S5 is involved in control of translational fidelity.</text>
</comment>
<comment type="similarity">
    <text evidence="1">Belongs to the universal ribosomal protein uS5 family.</text>
</comment>
<name>RS5_CORJK</name>